<reference key="1">
    <citation type="journal article" date="1998" name="Proc. Natl. Acad. Sci. U.S.A.">
        <title>Identification of genes expressed in human CD34(+) hematopoietic stem/progenitor cells by expressed sequence tags and efficient full-length cDNA cloning.</title>
        <authorList>
            <person name="Mao M."/>
            <person name="Fu G."/>
            <person name="Wu J.-S."/>
            <person name="Zhang Q.-H."/>
            <person name="Zhou J."/>
            <person name="Kan L.-X."/>
            <person name="Huang Q.-H."/>
            <person name="He K.-L."/>
            <person name="Gu B.-W."/>
            <person name="Han Z.-G."/>
            <person name="Shen Y."/>
            <person name="Gu J."/>
            <person name="Yu Y.-P."/>
            <person name="Xu S.-H."/>
            <person name="Wang Y.-X."/>
            <person name="Chen S.-J."/>
            <person name="Chen Z."/>
        </authorList>
    </citation>
    <scope>NUCLEOTIDE SEQUENCE [LARGE SCALE MRNA]</scope>
    <source>
        <tissue>Umbilical cord blood</tissue>
    </source>
</reference>
<reference key="2">
    <citation type="journal article" date="2003" name="Nature">
        <title>The DNA sequence of human chromosome 7.</title>
        <authorList>
            <person name="Hillier L.W."/>
            <person name="Fulton R.S."/>
            <person name="Fulton L.A."/>
            <person name="Graves T.A."/>
            <person name="Pepin K.H."/>
            <person name="Wagner-McPherson C."/>
            <person name="Layman D."/>
            <person name="Maas J."/>
            <person name="Jaeger S."/>
            <person name="Walker R."/>
            <person name="Wylie K."/>
            <person name="Sekhon M."/>
            <person name="Becker M.C."/>
            <person name="O'Laughlin M.D."/>
            <person name="Schaller M.E."/>
            <person name="Fewell G.A."/>
            <person name="Delehaunty K.D."/>
            <person name="Miner T.L."/>
            <person name="Nash W.E."/>
            <person name="Cordes M."/>
            <person name="Du H."/>
            <person name="Sun H."/>
            <person name="Edwards J."/>
            <person name="Bradshaw-Cordum H."/>
            <person name="Ali J."/>
            <person name="Andrews S."/>
            <person name="Isak A."/>
            <person name="Vanbrunt A."/>
            <person name="Nguyen C."/>
            <person name="Du F."/>
            <person name="Lamar B."/>
            <person name="Courtney L."/>
            <person name="Kalicki J."/>
            <person name="Ozersky P."/>
            <person name="Bielicki L."/>
            <person name="Scott K."/>
            <person name="Holmes A."/>
            <person name="Harkins R."/>
            <person name="Harris A."/>
            <person name="Strong C.M."/>
            <person name="Hou S."/>
            <person name="Tomlinson C."/>
            <person name="Dauphin-Kohlberg S."/>
            <person name="Kozlowicz-Reilly A."/>
            <person name="Leonard S."/>
            <person name="Rohlfing T."/>
            <person name="Rock S.M."/>
            <person name="Tin-Wollam A.-M."/>
            <person name="Abbott A."/>
            <person name="Minx P."/>
            <person name="Maupin R."/>
            <person name="Strowmatt C."/>
            <person name="Latreille P."/>
            <person name="Miller N."/>
            <person name="Johnson D."/>
            <person name="Murray J."/>
            <person name="Woessner J.P."/>
            <person name="Wendl M.C."/>
            <person name="Yang S.-P."/>
            <person name="Schultz B.R."/>
            <person name="Wallis J.W."/>
            <person name="Spieth J."/>
            <person name="Bieri T.A."/>
            <person name="Nelson J.O."/>
            <person name="Berkowicz N."/>
            <person name="Wohldmann P.E."/>
            <person name="Cook L.L."/>
            <person name="Hickenbotham M.T."/>
            <person name="Eldred J."/>
            <person name="Williams D."/>
            <person name="Bedell J.A."/>
            <person name="Mardis E.R."/>
            <person name="Clifton S.W."/>
            <person name="Chissoe S.L."/>
            <person name="Marra M.A."/>
            <person name="Raymond C."/>
            <person name="Haugen E."/>
            <person name="Gillett W."/>
            <person name="Zhou Y."/>
            <person name="James R."/>
            <person name="Phelps K."/>
            <person name="Iadanoto S."/>
            <person name="Bubb K."/>
            <person name="Simms E."/>
            <person name="Levy R."/>
            <person name="Clendenning J."/>
            <person name="Kaul R."/>
            <person name="Kent W.J."/>
            <person name="Furey T.S."/>
            <person name="Baertsch R.A."/>
            <person name="Brent M.R."/>
            <person name="Keibler E."/>
            <person name="Flicek P."/>
            <person name="Bork P."/>
            <person name="Suyama M."/>
            <person name="Bailey J.A."/>
            <person name="Portnoy M.E."/>
            <person name="Torrents D."/>
            <person name="Chinwalla A.T."/>
            <person name="Gish W.R."/>
            <person name="Eddy S.R."/>
            <person name="McPherson J.D."/>
            <person name="Olson M.V."/>
            <person name="Eichler E.E."/>
            <person name="Green E.D."/>
            <person name="Waterston R.H."/>
            <person name="Wilson R.K."/>
        </authorList>
    </citation>
    <scope>NUCLEOTIDE SEQUENCE [LARGE SCALE GENOMIC DNA]</scope>
</reference>
<reference key="3">
    <citation type="journal article" date="2009" name="Proc. Natl. Acad. Sci. U.S.A.">
        <title>Global profiling of protease cleavage sites by chemoselective labeling of protein N-termini.</title>
        <authorList>
            <person name="Xu G."/>
            <person name="Shin S.B."/>
            <person name="Jaffrey S.R."/>
        </authorList>
    </citation>
    <scope>PROTEIN SEQUENCE [LARGE SCALE ANALYSIS] OF 44-60</scope>
    <source>
        <tissue>Leukemic T-cell</tissue>
    </source>
</reference>
<reference key="4">
    <citation type="journal article" date="2011" name="BMC Syst. Biol.">
        <title>Initial characterization of the human central proteome.</title>
        <authorList>
            <person name="Burkard T.R."/>
            <person name="Planyavsky M."/>
            <person name="Kaupe I."/>
            <person name="Breitwieser F.P."/>
            <person name="Buerckstuemmer T."/>
            <person name="Bennett K.L."/>
            <person name="Superti-Furga G."/>
            <person name="Colinge J."/>
        </authorList>
    </citation>
    <scope>IDENTIFICATION BY MASS SPECTROMETRY [LARGE SCALE ANALYSIS]</scope>
</reference>
<reference key="5">
    <citation type="journal article" date="2012" name="EMBO Rep.">
        <title>Mitochondrial processing peptidase regulates PINK1 processing, import and Parkin recruitment.</title>
        <authorList>
            <person name="Greene A.W."/>
            <person name="Grenier K."/>
            <person name="Aguileta M.A."/>
            <person name="Muise S."/>
            <person name="Farazifard R."/>
            <person name="Haque M.E."/>
            <person name="McBride H.M."/>
            <person name="Park D.S."/>
            <person name="Fon E.A."/>
        </authorList>
    </citation>
    <scope>FUNCTION</scope>
    <scope>CATALYTIC ACTIVITY</scope>
    <scope>SUBCELLULAR LOCATION</scope>
</reference>
<reference key="6">
    <citation type="journal article" date="2014" name="J. Proteomics">
        <title>An enzyme assisted RP-RPLC approach for in-depth analysis of human liver phosphoproteome.</title>
        <authorList>
            <person name="Bian Y."/>
            <person name="Song C."/>
            <person name="Cheng K."/>
            <person name="Dong M."/>
            <person name="Wang F."/>
            <person name="Huang J."/>
            <person name="Sun D."/>
            <person name="Wang L."/>
            <person name="Ye M."/>
            <person name="Zou H."/>
        </authorList>
    </citation>
    <scope>IDENTIFICATION BY MASS SPECTROMETRY [LARGE SCALE ANALYSIS]</scope>
    <source>
        <tissue>Liver</tissue>
    </source>
</reference>
<reference key="7">
    <citation type="journal article" date="2015" name="Proteomics">
        <title>N-terminome analysis of the human mitochondrial proteome.</title>
        <authorList>
            <person name="Vaca Jacome A.S."/>
            <person name="Rabilloud T."/>
            <person name="Schaeffer-Reiss C."/>
            <person name="Rompais M."/>
            <person name="Ayoub D."/>
            <person name="Lane L."/>
            <person name="Bairoch A."/>
            <person name="Van Dorsselaer A."/>
            <person name="Carapito C."/>
        </authorList>
    </citation>
    <scope>IDENTIFICATION BY MASS SPECTROMETRY [LARGE SCALE ANALYSIS]</scope>
</reference>
<reference key="8">
    <citation type="journal article" date="2018" name="Am. J. Hum. Genet.">
        <title>Mutations in PMPCB encoding the catalytic subunit of the mitochondrial presequence protease cause neurodegeneration in early childhood.</title>
        <authorList>
            <person name="Voegtle F.N."/>
            <person name="Braendl B."/>
            <person name="Larson A."/>
            <person name="Pendziwiat M."/>
            <person name="Friederich M.W."/>
            <person name="White S.M."/>
            <person name="Basinger A."/>
            <person name="Kuecuekkoese C."/>
            <person name="Muhle H."/>
            <person name="Jaehn J.A."/>
            <person name="Keminer O."/>
            <person name="Helbig K.L."/>
            <person name="Delto C.F."/>
            <person name="Myketin L."/>
            <person name="Mossmann D."/>
            <person name="Burger N."/>
            <person name="Miyake N."/>
            <person name="Burnett A."/>
            <person name="van Baalen A."/>
            <person name="Lovell M.A."/>
            <person name="Matsumoto N."/>
            <person name="Walsh M."/>
            <person name="Yu H.C."/>
            <person name="Shinde D.N."/>
            <person name="Stephani U."/>
            <person name="Van Hove J.L.K."/>
            <person name="Mueller F.J."/>
            <person name="Helbig I."/>
        </authorList>
    </citation>
    <scope>INVOLVEMENT IN MMDS6</scope>
    <scope>VARIANTS MMDS6 CYS-175; HIS-175; GLY-177; PRO-201 AND THR-422</scope>
    <scope>CHARACTERIZATION OF VARIANTS MMDS6 CYS-175; HIS-175; GLY-177; PRO-201 AND THR-422</scope>
    <scope>FUNCTION</scope>
</reference>
<keyword id="KW-0903">Direct protein sequencing</keyword>
<keyword id="KW-0225">Disease variant</keyword>
<keyword id="KW-0378">Hydrolase</keyword>
<keyword id="KW-0479">Metal-binding</keyword>
<keyword id="KW-0482">Metalloprotease</keyword>
<keyword id="KW-0496">Mitochondrion</keyword>
<keyword id="KW-0523">Neurodegeneration</keyword>
<keyword id="KW-0645">Protease</keyword>
<keyword id="KW-1267">Proteomics identification</keyword>
<keyword id="KW-1185">Reference proteome</keyword>
<keyword id="KW-0809">Transit peptide</keyword>
<keyword id="KW-0862">Zinc</keyword>
<dbReference type="EC" id="3.4.24.64" evidence="8"/>
<dbReference type="EMBL" id="AF054182">
    <property type="protein sequence ID" value="AAC39915.1"/>
    <property type="molecule type" value="mRNA"/>
</dbReference>
<dbReference type="EMBL" id="AC004668">
    <property type="status" value="NOT_ANNOTATED_CDS"/>
    <property type="molecule type" value="Genomic_DNA"/>
</dbReference>
<dbReference type="CCDS" id="CCDS5730.1"/>
<dbReference type="RefSeq" id="NP_004270.2">
    <property type="nucleotide sequence ID" value="NM_004279.3"/>
</dbReference>
<dbReference type="SMR" id="O75439"/>
<dbReference type="BioGRID" id="114889">
    <property type="interactions" value="387"/>
</dbReference>
<dbReference type="ComplexPortal" id="CPX-6243">
    <property type="entry name" value="Mitochondrial processing peptidase complex"/>
</dbReference>
<dbReference type="FunCoup" id="O75439">
    <property type="interactions" value="3017"/>
</dbReference>
<dbReference type="IntAct" id="O75439">
    <property type="interactions" value="93"/>
</dbReference>
<dbReference type="MINT" id="O75439"/>
<dbReference type="STRING" id="9606.ENSP00000249269"/>
<dbReference type="MEROPS" id="M16.973"/>
<dbReference type="GlyCosmos" id="O75439">
    <property type="glycosylation" value="1 site, 1 glycan"/>
</dbReference>
<dbReference type="GlyGen" id="O75439">
    <property type="glycosylation" value="3 sites, 1 O-linked glycan (3 sites)"/>
</dbReference>
<dbReference type="iPTMnet" id="O75439"/>
<dbReference type="MetOSite" id="O75439"/>
<dbReference type="PhosphoSitePlus" id="O75439"/>
<dbReference type="SwissPalm" id="O75439"/>
<dbReference type="BioMuta" id="PMPCB"/>
<dbReference type="CPTAC" id="CPTAC-427"/>
<dbReference type="jPOST" id="O75439"/>
<dbReference type="MassIVE" id="O75439"/>
<dbReference type="PaxDb" id="9606-ENSP00000249269"/>
<dbReference type="PeptideAtlas" id="O75439"/>
<dbReference type="ProteomicsDB" id="50007"/>
<dbReference type="Pumba" id="O75439"/>
<dbReference type="Antibodypedia" id="31179">
    <property type="antibodies" value="187 antibodies from 28 providers"/>
</dbReference>
<dbReference type="DNASU" id="9512"/>
<dbReference type="Ensembl" id="ENST00000249269.9">
    <property type="protein sequence ID" value="ENSP00000249269.4"/>
    <property type="gene ID" value="ENSG00000105819.15"/>
</dbReference>
<dbReference type="GeneID" id="9512"/>
<dbReference type="KEGG" id="hsa:9512"/>
<dbReference type="MANE-Select" id="ENST00000249269.9">
    <property type="protein sequence ID" value="ENSP00000249269.4"/>
    <property type="RefSeq nucleotide sequence ID" value="NM_004279.3"/>
    <property type="RefSeq protein sequence ID" value="NP_004270.2"/>
</dbReference>
<dbReference type="UCSC" id="uc003vbl.4">
    <property type="organism name" value="human"/>
</dbReference>
<dbReference type="AGR" id="HGNC:9119"/>
<dbReference type="CTD" id="9512"/>
<dbReference type="DisGeNET" id="9512"/>
<dbReference type="GeneCards" id="PMPCB"/>
<dbReference type="HGNC" id="HGNC:9119">
    <property type="gene designation" value="PMPCB"/>
</dbReference>
<dbReference type="HPA" id="ENSG00000105819">
    <property type="expression patterns" value="Low tissue specificity"/>
</dbReference>
<dbReference type="MalaCards" id="PMPCB"/>
<dbReference type="MIM" id="603131">
    <property type="type" value="gene"/>
</dbReference>
<dbReference type="MIM" id="617954">
    <property type="type" value="phenotype"/>
</dbReference>
<dbReference type="neXtProt" id="NX_O75439"/>
<dbReference type="OpenTargets" id="ENSG00000105819"/>
<dbReference type="Orphanet" id="569290">
    <property type="disease" value="Multiple mitochondrial dysfunctions syndrome type 6"/>
</dbReference>
<dbReference type="PharmGKB" id="PA33445"/>
<dbReference type="VEuPathDB" id="HostDB:ENSG00000105819"/>
<dbReference type="eggNOG" id="KOG0960">
    <property type="taxonomic scope" value="Eukaryota"/>
</dbReference>
<dbReference type="GeneTree" id="ENSGT00940000156608"/>
<dbReference type="HOGENOM" id="CLU_009902_4_0_1"/>
<dbReference type="InParanoid" id="O75439"/>
<dbReference type="OMA" id="IDVVCDM"/>
<dbReference type="OrthoDB" id="10251424at2759"/>
<dbReference type="PAN-GO" id="O75439">
    <property type="GO annotations" value="3 GO annotations based on evolutionary models"/>
</dbReference>
<dbReference type="PhylomeDB" id="O75439"/>
<dbReference type="TreeFam" id="TF105032"/>
<dbReference type="BRENDA" id="3.4.24.64">
    <property type="organism ID" value="2681"/>
</dbReference>
<dbReference type="PathwayCommons" id="O75439"/>
<dbReference type="Reactome" id="R-HSA-1268020">
    <property type="pathway name" value="Mitochondrial protein import"/>
</dbReference>
<dbReference type="Reactome" id="R-HSA-8949664">
    <property type="pathway name" value="Processing of SMDT1"/>
</dbReference>
<dbReference type="SignaLink" id="O75439"/>
<dbReference type="SIGNOR" id="O75439"/>
<dbReference type="BioGRID-ORCS" id="9512">
    <property type="hits" value="750 hits in 1170 CRISPR screens"/>
</dbReference>
<dbReference type="CD-CODE" id="5965E019">
    <property type="entry name" value="mtRNA granule"/>
</dbReference>
<dbReference type="CD-CODE" id="91857CE7">
    <property type="entry name" value="Nucleolus"/>
</dbReference>
<dbReference type="ChiTaRS" id="PMPCB">
    <property type="organism name" value="human"/>
</dbReference>
<dbReference type="GeneWiki" id="PMPCB"/>
<dbReference type="GenomeRNAi" id="9512"/>
<dbReference type="Pharos" id="O75439">
    <property type="development level" value="Tbio"/>
</dbReference>
<dbReference type="PRO" id="PR:O75439"/>
<dbReference type="Proteomes" id="UP000005640">
    <property type="component" value="Chromosome 7"/>
</dbReference>
<dbReference type="RNAct" id="O75439">
    <property type="molecule type" value="protein"/>
</dbReference>
<dbReference type="Bgee" id="ENSG00000105819">
    <property type="expression patterns" value="Expressed in right adrenal gland cortex and 208 other cell types or tissues"/>
</dbReference>
<dbReference type="ExpressionAtlas" id="O75439">
    <property type="expression patterns" value="baseline and differential"/>
</dbReference>
<dbReference type="GO" id="GO:0005759">
    <property type="term" value="C:mitochondrial matrix"/>
    <property type="evidence" value="ECO:0000304"/>
    <property type="project" value="Reactome"/>
</dbReference>
<dbReference type="GO" id="GO:0017087">
    <property type="term" value="C:mitochondrial processing peptidase complex"/>
    <property type="evidence" value="ECO:0000303"/>
    <property type="project" value="ComplexPortal"/>
</dbReference>
<dbReference type="GO" id="GO:0005739">
    <property type="term" value="C:mitochondrion"/>
    <property type="evidence" value="ECO:0000314"/>
    <property type="project" value="UniProtKB"/>
</dbReference>
<dbReference type="GO" id="GO:0046872">
    <property type="term" value="F:metal ion binding"/>
    <property type="evidence" value="ECO:0007669"/>
    <property type="project" value="UniProtKB-KW"/>
</dbReference>
<dbReference type="GO" id="GO:0004222">
    <property type="term" value="F:metalloendopeptidase activity"/>
    <property type="evidence" value="ECO:0000314"/>
    <property type="project" value="UniProtKB"/>
</dbReference>
<dbReference type="GO" id="GO:0006851">
    <property type="term" value="P:mitochondrial calcium ion transmembrane transport"/>
    <property type="evidence" value="ECO:0000304"/>
    <property type="project" value="Reactome"/>
</dbReference>
<dbReference type="GO" id="GO:0006627">
    <property type="term" value="P:protein processing involved in protein targeting to mitochondrion"/>
    <property type="evidence" value="ECO:0000314"/>
    <property type="project" value="UniProtKB"/>
</dbReference>
<dbReference type="FunFam" id="3.30.830.10:FF:000002">
    <property type="entry name" value="Mitochondrial-processing peptidase subunit beta"/>
    <property type="match status" value="1"/>
</dbReference>
<dbReference type="FunFam" id="3.30.830.10:FF:000001">
    <property type="entry name" value="Mitochondrial-processing peptidase subunit beta, mitochondrial"/>
    <property type="match status" value="1"/>
</dbReference>
<dbReference type="Gene3D" id="3.30.830.10">
    <property type="entry name" value="Metalloenzyme, LuxS/M16 peptidase-like"/>
    <property type="match status" value="2"/>
</dbReference>
<dbReference type="InterPro" id="IPR011249">
    <property type="entry name" value="Metalloenz_LuxS/M16"/>
</dbReference>
<dbReference type="InterPro" id="IPR050361">
    <property type="entry name" value="MPP/UQCRC_Complex"/>
</dbReference>
<dbReference type="InterPro" id="IPR011765">
    <property type="entry name" value="Pept_M16_N"/>
</dbReference>
<dbReference type="InterPro" id="IPR001431">
    <property type="entry name" value="Pept_M16_Zn_BS"/>
</dbReference>
<dbReference type="InterPro" id="IPR007863">
    <property type="entry name" value="Peptidase_M16_C"/>
</dbReference>
<dbReference type="PANTHER" id="PTHR11851">
    <property type="entry name" value="METALLOPROTEASE"/>
    <property type="match status" value="1"/>
</dbReference>
<dbReference type="PANTHER" id="PTHR11851:SF103">
    <property type="entry name" value="MITOCHONDRIAL-PROCESSING PEPTIDASE SUBUNIT BETA"/>
    <property type="match status" value="1"/>
</dbReference>
<dbReference type="Pfam" id="PF00675">
    <property type="entry name" value="Peptidase_M16"/>
    <property type="match status" value="1"/>
</dbReference>
<dbReference type="Pfam" id="PF05193">
    <property type="entry name" value="Peptidase_M16_C"/>
    <property type="match status" value="1"/>
</dbReference>
<dbReference type="SUPFAM" id="SSF63411">
    <property type="entry name" value="LuxS/MPP-like metallohydrolase"/>
    <property type="match status" value="2"/>
</dbReference>
<dbReference type="PROSITE" id="PS00143">
    <property type="entry name" value="INSULINASE"/>
    <property type="match status" value="1"/>
</dbReference>
<proteinExistence type="evidence at protein level"/>
<evidence type="ECO:0000250" key="1">
    <source>
        <dbReference type="UniProtKB" id="P10507"/>
    </source>
</evidence>
<evidence type="ECO:0000250" key="2">
    <source>
        <dbReference type="UniProtKB" id="Q03346"/>
    </source>
</evidence>
<evidence type="ECO:0000255" key="3">
    <source>
        <dbReference type="PROSITE-ProRule" id="PRU10096"/>
    </source>
</evidence>
<evidence type="ECO:0000269" key="4">
    <source>
    </source>
</evidence>
<evidence type="ECO:0000269" key="5">
    <source>
    </source>
</evidence>
<evidence type="ECO:0000269" key="6">
    <source>
    </source>
</evidence>
<evidence type="ECO:0000305" key="7"/>
<evidence type="ECO:0000305" key="8">
    <source>
    </source>
</evidence>
<protein>
    <recommendedName>
        <fullName>Mitochondrial-processing peptidase subunit beta</fullName>
        <ecNumber evidence="8">3.4.24.64</ecNumber>
    </recommendedName>
    <alternativeName>
        <fullName>Beta-MPP</fullName>
    </alternativeName>
    <alternativeName>
        <fullName>P-52</fullName>
    </alternativeName>
</protein>
<comment type="function">
    <text evidence="2 5 6 8">Catalytic subunit of the essential mitochondrial processing protease (MPP), which cleaves the mitochondrial sequence off newly imported precursors proteins (Probable) (PubMed:29576218). Preferentially, cleaves after an arginine at position P2 (By similarity). Required for PINK1 turnover by coupling PINK1 mitochondrial import and cleavage, which results in subsequent PINK1 proteolysis (PubMed:22354088).</text>
</comment>
<comment type="catalytic activity">
    <reaction evidence="8">
        <text>Release of N-terminal transit peptides from precursor proteins imported into the mitochondrion, typically with Arg in position P2.</text>
        <dbReference type="EC" id="3.4.24.64"/>
    </reaction>
</comment>
<comment type="cofactor">
    <cofactor evidence="1">
        <name>Zn(2+)</name>
        <dbReference type="ChEBI" id="CHEBI:29105"/>
    </cofactor>
    <text evidence="1">Binds 1 zinc ion per subunit.</text>
</comment>
<comment type="activity regulation">
    <text evidence="1">Binding to PMPCA is required for catalytic activity.</text>
</comment>
<comment type="subunit">
    <text evidence="1">Heterodimer of PMPCA (alpha) and PMPCB (beta) subunits, forming the mitochondrial processing protease (MPP) in which PMPCA is involved in substrate recognition and binding and PMPCB is the catalytic subunit.</text>
</comment>
<comment type="subcellular location">
    <subcellularLocation>
        <location evidence="5">Mitochondrion matrix</location>
    </subcellularLocation>
</comment>
<comment type="disease" evidence="6">
    <disease id="DI-05241">
        <name>Multiple mitochondrial dysfunctions syndrome 6</name>
        <acronym>MMDS6</acronym>
        <description>An autosomal recessive, neurodegenerative disorder characterized by basal ganglia lesions, cerebellar atrophy, and neurologic regression in the first year of life. Common features include truncal hypotonia, lack of independent ambulation, poor speech, intellectual disability, and motor abnormalities, such as ataxia, dystonia, and spasticity.</description>
        <dbReference type="MIM" id="617954"/>
    </disease>
    <text>The disease is caused by variants affecting the gene represented in this entry.</text>
</comment>
<comment type="similarity">
    <text evidence="7">Belongs to the peptidase M16 family.</text>
</comment>
<accession>O75439</accession>
<accession>O60416</accession>
<accession>Q96FV4</accession>
<organism>
    <name type="scientific">Homo sapiens</name>
    <name type="common">Human</name>
    <dbReference type="NCBI Taxonomy" id="9606"/>
    <lineage>
        <taxon>Eukaryota</taxon>
        <taxon>Metazoa</taxon>
        <taxon>Chordata</taxon>
        <taxon>Craniata</taxon>
        <taxon>Vertebrata</taxon>
        <taxon>Euteleostomi</taxon>
        <taxon>Mammalia</taxon>
        <taxon>Eutheria</taxon>
        <taxon>Euarchontoglires</taxon>
        <taxon>Primates</taxon>
        <taxon>Haplorrhini</taxon>
        <taxon>Catarrhini</taxon>
        <taxon>Hominidae</taxon>
        <taxon>Homo</taxon>
    </lineage>
</organism>
<gene>
    <name type="primary">PMPCB</name>
    <name type="synonym">MPPB</name>
</gene>
<feature type="transit peptide" description="Mitochondrion" evidence="4">
    <location>
        <begin position="1"/>
        <end position="43"/>
    </location>
</feature>
<feature type="chain" id="PRO_0000026777" description="Mitochondrial-processing peptidase subunit beta">
    <location>
        <begin position="44"/>
        <end position="489"/>
    </location>
</feature>
<feature type="active site" description="Proton acceptor" evidence="3">
    <location>
        <position position="104"/>
    </location>
</feature>
<feature type="binding site" evidence="3">
    <location>
        <position position="101"/>
    </location>
    <ligand>
        <name>Zn(2+)</name>
        <dbReference type="ChEBI" id="CHEBI:29105"/>
    </ligand>
</feature>
<feature type="binding site" evidence="3">
    <location>
        <position position="105"/>
    </location>
    <ligand>
        <name>Zn(2+)</name>
        <dbReference type="ChEBI" id="CHEBI:29105"/>
    </ligand>
</feature>
<feature type="binding site" evidence="3">
    <location>
        <position position="181"/>
    </location>
    <ligand>
        <name>Zn(2+)</name>
        <dbReference type="ChEBI" id="CHEBI:29105"/>
    </ligand>
</feature>
<feature type="site" description="Required for the specific determination of the substrate cleavage site" evidence="2">
    <location>
        <position position="191"/>
    </location>
</feature>
<feature type="site" description="Required for the specific determination of the substrate cleavage site" evidence="2">
    <location>
        <position position="195"/>
    </location>
</feature>
<feature type="sequence variant" id="VAR_080804" description="In MMDS6; exhibits temperature-sensitive defect in presequence processing activity, when tested in yeast; dbSNP:rs145596167." evidence="6">
    <original>R</original>
    <variation>C</variation>
    <location>
        <position position="175"/>
    </location>
</feature>
<feature type="sequence variant" id="VAR_080805" description="In MMDS6; exhibits temperature-sensitive defect in presequence processing activity, when tested in yeast; dbSNP:rs200188353." evidence="6">
    <original>R</original>
    <variation>H</variation>
    <location>
        <position position="175"/>
    </location>
</feature>
<feature type="sequence variant" id="VAR_080806" description="In MMDS6; exhibits temperature-sensitive defect in presequence processing activity, when tested in yeast; dbSNP:rs1436866272." evidence="6">
    <original>V</original>
    <variation>G</variation>
    <location>
        <position position="177"/>
    </location>
</feature>
<feature type="sequence variant" id="VAR_080807" description="In MMDS6; exhibits temperature-sensitive defect in presequence processing activity, when tested in yeast; dbSNP:rs146343535." evidence="6">
    <original>A</original>
    <variation>P</variation>
    <location>
        <position position="201"/>
    </location>
</feature>
<feature type="sequence variant" id="VAR_051572" description="In dbSNP:rs3087615.">
    <original>E</original>
    <variation>D</variation>
    <location>
        <position position="396"/>
    </location>
</feature>
<feature type="sequence variant" id="VAR_080808" description="In MMDS6; small decrease in protein level; impaired frataxin/FXN processing, leading to the accumulation of an intermediate form, called iFXN; dbSNP:rs1461200360." evidence="6">
    <original>I</original>
    <variation>T</variation>
    <location>
        <position position="422"/>
    </location>
</feature>
<feature type="sequence conflict" description="In Ref. 1; AAC39915." evidence="7" ref="1">
    <original>RR</original>
    <variation>GG</variation>
    <location>
        <begin position="16"/>
        <end position="17"/>
    </location>
</feature>
<name>MPPB_HUMAN</name>
<sequence length="489" mass="54366">MAAAAARVVLSSAARRRLWGFSESLLIRGAAGRSLYFGENRLRSTQAATQVVLNVPETRVTCLESGLRVASEDSGLSTCTVGLWIDAGSRYENEKNNGTAHFLEHMAFKGTKKRSQLDLELEIENMGAHLNAYTSREQTVYYAKAFSKDLPRAVEILADIIQNSTLGEAEIERERGVILREMQEVETNLQEVVFDYLHATAYQNTALGRTILGPTENIKSISRKDLVDYITTHYKGPRIVLAAAGGVSHDELLDLAKFHFGDSLCTHKGEIPALPPCKFTGSEIRVRDDKMPLAHLAIAVEAVGWAHPDTICLMVANTLIGNWDRSFGGGMNLSSKLAQLTCHGNLCHSFQSFNTSYTDTGLWGLYMVCESSTVADMLHVVQKEWMRLCTSVTESEVARARNLLKTNMLLQLDGSTPICEDIGRQMLCYNRRIPIPELEARIDAVNAETIREVCTKYIYNRSPAIAAVGPIKQLPDFKQIRSNMCWLRD</sequence>